<reference key="1">
    <citation type="submission" date="2007-10" db="EMBL/GenBank/DDBJ databases">
        <title>Complete sequence of Shewanella pealeana ATCC 700345.</title>
        <authorList>
            <consortium name="US DOE Joint Genome Institute"/>
            <person name="Copeland A."/>
            <person name="Lucas S."/>
            <person name="Lapidus A."/>
            <person name="Barry K."/>
            <person name="Glavina del Rio T."/>
            <person name="Dalin E."/>
            <person name="Tice H."/>
            <person name="Pitluck S."/>
            <person name="Chertkov O."/>
            <person name="Brettin T."/>
            <person name="Bruce D."/>
            <person name="Detter J.C."/>
            <person name="Han C."/>
            <person name="Schmutz J."/>
            <person name="Larimer F."/>
            <person name="Land M."/>
            <person name="Hauser L."/>
            <person name="Kyrpides N."/>
            <person name="Kim E."/>
            <person name="Zhao J.-S.Z."/>
            <person name="Manno D."/>
            <person name="Hawari J."/>
            <person name="Richardson P."/>
        </authorList>
    </citation>
    <scope>NUCLEOTIDE SEQUENCE [LARGE SCALE GENOMIC DNA]</scope>
    <source>
        <strain>ATCC 700345 / ANG-SQ1</strain>
    </source>
</reference>
<feature type="chain" id="PRO_1000084451" description="tRNA (guanine-N(7)-)-methyltransferase">
    <location>
        <begin position="1"/>
        <end position="237"/>
    </location>
</feature>
<feature type="active site" evidence="1">
    <location>
        <position position="143"/>
    </location>
</feature>
<feature type="binding site" evidence="2">
    <location>
        <position position="68"/>
    </location>
    <ligand>
        <name>S-adenosyl-L-methionine</name>
        <dbReference type="ChEBI" id="CHEBI:59789"/>
    </ligand>
</feature>
<feature type="binding site" evidence="2">
    <location>
        <position position="93"/>
    </location>
    <ligand>
        <name>S-adenosyl-L-methionine</name>
        <dbReference type="ChEBI" id="CHEBI:59789"/>
    </ligand>
</feature>
<feature type="binding site" evidence="2">
    <location>
        <position position="120"/>
    </location>
    <ligand>
        <name>S-adenosyl-L-methionine</name>
        <dbReference type="ChEBI" id="CHEBI:59789"/>
    </ligand>
</feature>
<feature type="binding site" evidence="2">
    <location>
        <position position="143"/>
    </location>
    <ligand>
        <name>S-adenosyl-L-methionine</name>
        <dbReference type="ChEBI" id="CHEBI:59789"/>
    </ligand>
</feature>
<feature type="binding site" evidence="2">
    <location>
        <position position="147"/>
    </location>
    <ligand>
        <name>substrate</name>
    </ligand>
</feature>
<feature type="binding site" evidence="2">
    <location>
        <position position="179"/>
    </location>
    <ligand>
        <name>substrate</name>
    </ligand>
</feature>
<feature type="binding site" evidence="2">
    <location>
        <begin position="216"/>
        <end position="219"/>
    </location>
    <ligand>
        <name>substrate</name>
    </ligand>
</feature>
<proteinExistence type="inferred from homology"/>
<protein>
    <recommendedName>
        <fullName evidence="2">tRNA (guanine-N(7)-)-methyltransferase</fullName>
        <ecNumber evidence="2">2.1.1.33</ecNumber>
    </recommendedName>
    <alternativeName>
        <fullName evidence="2">tRNA (guanine(46)-N(7))-methyltransferase</fullName>
    </alternativeName>
    <alternativeName>
        <fullName evidence="2">tRNA(m7G46)-methyltransferase</fullName>
    </alternativeName>
</protein>
<gene>
    <name evidence="2" type="primary">trmB</name>
    <name type="ordered locus">Spea_1109</name>
</gene>
<name>TRMB_SHEPA</name>
<keyword id="KW-0489">Methyltransferase</keyword>
<keyword id="KW-1185">Reference proteome</keyword>
<keyword id="KW-0949">S-adenosyl-L-methionine</keyword>
<keyword id="KW-0808">Transferase</keyword>
<keyword id="KW-0819">tRNA processing</keyword>
<dbReference type="EC" id="2.1.1.33" evidence="2"/>
<dbReference type="EMBL" id="CP000851">
    <property type="protein sequence ID" value="ABV86436.1"/>
    <property type="molecule type" value="Genomic_DNA"/>
</dbReference>
<dbReference type="RefSeq" id="WP_012154365.1">
    <property type="nucleotide sequence ID" value="NC_009901.1"/>
</dbReference>
<dbReference type="SMR" id="A8H1J9"/>
<dbReference type="STRING" id="398579.Spea_1109"/>
<dbReference type="KEGG" id="spl:Spea_1109"/>
<dbReference type="eggNOG" id="COG0220">
    <property type="taxonomic scope" value="Bacteria"/>
</dbReference>
<dbReference type="HOGENOM" id="CLU_050910_0_1_6"/>
<dbReference type="OrthoDB" id="9802090at2"/>
<dbReference type="UniPathway" id="UPA00989"/>
<dbReference type="Proteomes" id="UP000002608">
    <property type="component" value="Chromosome"/>
</dbReference>
<dbReference type="GO" id="GO:0043527">
    <property type="term" value="C:tRNA methyltransferase complex"/>
    <property type="evidence" value="ECO:0007669"/>
    <property type="project" value="TreeGrafter"/>
</dbReference>
<dbReference type="GO" id="GO:0008176">
    <property type="term" value="F:tRNA (guanine(46)-N7)-methyltransferase activity"/>
    <property type="evidence" value="ECO:0007669"/>
    <property type="project" value="UniProtKB-UniRule"/>
</dbReference>
<dbReference type="CDD" id="cd02440">
    <property type="entry name" value="AdoMet_MTases"/>
    <property type="match status" value="1"/>
</dbReference>
<dbReference type="FunFam" id="3.40.50.150:FF:000024">
    <property type="entry name" value="tRNA (guanine-N(7)-)-methyltransferase"/>
    <property type="match status" value="1"/>
</dbReference>
<dbReference type="Gene3D" id="3.40.50.150">
    <property type="entry name" value="Vaccinia Virus protein VP39"/>
    <property type="match status" value="1"/>
</dbReference>
<dbReference type="HAMAP" id="MF_01057">
    <property type="entry name" value="tRNA_methyltr_TrmB"/>
    <property type="match status" value="1"/>
</dbReference>
<dbReference type="InterPro" id="IPR029063">
    <property type="entry name" value="SAM-dependent_MTases_sf"/>
</dbReference>
<dbReference type="InterPro" id="IPR003358">
    <property type="entry name" value="tRNA_(Gua-N-7)_MeTrfase_Trmb"/>
</dbReference>
<dbReference type="InterPro" id="IPR055361">
    <property type="entry name" value="tRNA_methyltr_TrmB_bact"/>
</dbReference>
<dbReference type="NCBIfam" id="TIGR00091">
    <property type="entry name" value="tRNA (guanosine(46)-N7)-methyltransferase TrmB"/>
    <property type="match status" value="1"/>
</dbReference>
<dbReference type="PANTHER" id="PTHR23417">
    <property type="entry name" value="3-DEOXY-D-MANNO-OCTULOSONIC-ACID TRANSFERASE/TRNA GUANINE-N 7 - -METHYLTRANSFERASE"/>
    <property type="match status" value="1"/>
</dbReference>
<dbReference type="PANTHER" id="PTHR23417:SF14">
    <property type="entry name" value="PENTACOTRIPEPTIDE-REPEAT REGION OF PRORP DOMAIN-CONTAINING PROTEIN"/>
    <property type="match status" value="1"/>
</dbReference>
<dbReference type="Pfam" id="PF02390">
    <property type="entry name" value="Methyltransf_4"/>
    <property type="match status" value="1"/>
</dbReference>
<dbReference type="SUPFAM" id="SSF53335">
    <property type="entry name" value="S-adenosyl-L-methionine-dependent methyltransferases"/>
    <property type="match status" value="1"/>
</dbReference>
<dbReference type="PROSITE" id="PS51625">
    <property type="entry name" value="SAM_MT_TRMB"/>
    <property type="match status" value="1"/>
</dbReference>
<organism>
    <name type="scientific">Shewanella pealeana (strain ATCC 700345 / ANG-SQ1)</name>
    <dbReference type="NCBI Taxonomy" id="398579"/>
    <lineage>
        <taxon>Bacteria</taxon>
        <taxon>Pseudomonadati</taxon>
        <taxon>Pseudomonadota</taxon>
        <taxon>Gammaproteobacteria</taxon>
        <taxon>Alteromonadales</taxon>
        <taxon>Shewanellaceae</taxon>
        <taxon>Shewanella</taxon>
    </lineage>
</organism>
<accession>A8H1J9</accession>
<comment type="function">
    <text evidence="2">Catalyzes the formation of N(7)-methylguanine at position 46 (m7G46) in tRNA.</text>
</comment>
<comment type="catalytic activity">
    <reaction evidence="2">
        <text>guanosine(46) in tRNA + S-adenosyl-L-methionine = N(7)-methylguanosine(46) in tRNA + S-adenosyl-L-homocysteine</text>
        <dbReference type="Rhea" id="RHEA:42708"/>
        <dbReference type="Rhea" id="RHEA-COMP:10188"/>
        <dbReference type="Rhea" id="RHEA-COMP:10189"/>
        <dbReference type="ChEBI" id="CHEBI:57856"/>
        <dbReference type="ChEBI" id="CHEBI:59789"/>
        <dbReference type="ChEBI" id="CHEBI:74269"/>
        <dbReference type="ChEBI" id="CHEBI:74480"/>
        <dbReference type="EC" id="2.1.1.33"/>
    </reaction>
</comment>
<comment type="pathway">
    <text evidence="2">tRNA modification; N(7)-methylguanine-tRNA biosynthesis.</text>
</comment>
<comment type="similarity">
    <text evidence="2">Belongs to the class I-like SAM-binding methyltransferase superfamily. TrmB family.</text>
</comment>
<sequence length="237" mass="26457">MSDVTTAEFNEEGKYLRKVRSFVLREGRLTKGQAQAMEQQWPKIGLDYTPEPIDLVEVFGREADTVLEIGFGMGASLVAMAKAAPELNFIGIEVHKPGVGACLAEAAEAGVTNLRVYHHDAIEVLENSIAEGSLACVQLFFPDPWHKTRHHKRRIVQAPFAELIRSKLKVGGVFHLATDWENYSEHMLEVMTAAPGYKNQSATGDVVERPAHRPLTKFEARGHRLGHGVWDLMFERV</sequence>
<evidence type="ECO:0000250" key="1"/>
<evidence type="ECO:0000255" key="2">
    <source>
        <dbReference type="HAMAP-Rule" id="MF_01057"/>
    </source>
</evidence>